<protein>
    <recommendedName>
        <fullName evidence="1">UPF0253 protein YPDSF_1647</fullName>
    </recommendedName>
</protein>
<sequence length="66" mass="7228">MQQYCELVRRFYAEIGSGDLGYVPDALRCVLKALDEVAANDALPSSVREQAAYAAANLLVSDYVDE</sequence>
<comment type="similarity">
    <text evidence="1">Belongs to the UPF0253 family.</text>
</comment>
<organism>
    <name type="scientific">Yersinia pestis (strain Pestoides F)</name>
    <dbReference type="NCBI Taxonomy" id="386656"/>
    <lineage>
        <taxon>Bacteria</taxon>
        <taxon>Pseudomonadati</taxon>
        <taxon>Pseudomonadota</taxon>
        <taxon>Gammaproteobacteria</taxon>
        <taxon>Enterobacterales</taxon>
        <taxon>Yersiniaceae</taxon>
        <taxon>Yersinia</taxon>
    </lineage>
</organism>
<accession>A4TL70</accession>
<dbReference type="EMBL" id="CP000668">
    <property type="protein sequence ID" value="ABP40032.1"/>
    <property type="molecule type" value="Genomic_DNA"/>
</dbReference>
<dbReference type="RefSeq" id="WP_002212152.1">
    <property type="nucleotide sequence ID" value="NZ_CP009715.1"/>
</dbReference>
<dbReference type="SMR" id="A4TL70"/>
<dbReference type="KEGG" id="ypp:YPDSF_1647"/>
<dbReference type="PATRIC" id="fig|386656.14.peg.2115"/>
<dbReference type="HAMAP" id="MF_01064">
    <property type="entry name" value="UPF0253"/>
    <property type="match status" value="1"/>
</dbReference>
<dbReference type="InterPro" id="IPR009624">
    <property type="entry name" value="UPF0253"/>
</dbReference>
<dbReference type="NCBIfam" id="NF003436">
    <property type="entry name" value="PRK04964.1"/>
    <property type="match status" value="1"/>
</dbReference>
<dbReference type="Pfam" id="PF06786">
    <property type="entry name" value="UPF0253"/>
    <property type="match status" value="1"/>
</dbReference>
<proteinExistence type="inferred from homology"/>
<evidence type="ECO:0000255" key="1">
    <source>
        <dbReference type="HAMAP-Rule" id="MF_01064"/>
    </source>
</evidence>
<reference key="1">
    <citation type="submission" date="2007-02" db="EMBL/GenBank/DDBJ databases">
        <title>Complete sequence of chromosome of Yersinia pestis Pestoides F.</title>
        <authorList>
            <consortium name="US DOE Joint Genome Institute"/>
            <person name="Copeland A."/>
            <person name="Lucas S."/>
            <person name="Lapidus A."/>
            <person name="Barry K."/>
            <person name="Detter J.C."/>
            <person name="Glavina del Rio T."/>
            <person name="Hammon N."/>
            <person name="Israni S."/>
            <person name="Dalin E."/>
            <person name="Tice H."/>
            <person name="Pitluck S."/>
            <person name="Di Bartolo G."/>
            <person name="Chain P."/>
            <person name="Malfatti S."/>
            <person name="Shin M."/>
            <person name="Vergez L."/>
            <person name="Schmutz J."/>
            <person name="Larimer F."/>
            <person name="Land M."/>
            <person name="Hauser L."/>
            <person name="Worsham P."/>
            <person name="Chu M."/>
            <person name="Bearden S."/>
            <person name="Garcia E."/>
            <person name="Richardson P."/>
        </authorList>
    </citation>
    <scope>NUCLEOTIDE SEQUENCE [LARGE SCALE GENOMIC DNA]</scope>
    <source>
        <strain>Pestoides F</strain>
    </source>
</reference>
<name>Y1647_YERPP</name>
<gene>
    <name type="ordered locus">YPDSF_1647</name>
</gene>
<feature type="chain" id="PRO_1000064508" description="UPF0253 protein YPDSF_1647">
    <location>
        <begin position="1"/>
        <end position="66"/>
    </location>
</feature>